<sequence>MKKKANEEKAQKRAKTEAKAEATQENKTKENNKAKESKIKESKIKEAKAKEPIPVKKLSFNEALEELFANSLSDCVSYESIIQISAKVPTLAQIKKIKELCQKYQKKLVSSSEYAKKLNAIDKIKKTEEKQKVLDEELEDGYDFLKEKDFLEWSRSDSPVRMYLREMGDIKLLSKDEEIELSKQIRLGEDIILDAICSVPYLIDFIYAYKDALINRERRVKELFRSFDDDDENSVSDSKKDEDNEEDEENEERKKVVSEKDKKRVEKVQESFKALDKAKKEWLKALEAPIDEREDELVRSLTLAYKRQTLKDRLYDLEPTSKLINELVKTMETTLKSGDGFEKELKRLEYKLPLFNDTLIANHKKILANITNMTKEDIIAQVPEATMVSVYMDLKKLFLTKEASEEGFDLAPNKLKEILEQIKRGKLISDRAKNKMAKSNLRLVVSIAKRFTSRGLPFLDLIQEGNIGLMKAVDKFEHEKGFKFSTYATWWIKQAISRAIADQARTIRIPIHMIDTINRINKVMRKHIQENGKEPDLEVVAEEVGLSLDKVKNVIKVTKEPISLETPVGNDDDGKFGDFVEDKNIVSSIDHIMREDLKAQIESVLDQLNEREKAVIRMRFGLLDDESDRTLEEIGKELNVTRERVRQIESSAIKKLRSPQYGRILRNYLRI</sequence>
<proteinExistence type="evidence at protein level"/>
<evidence type="ECO:0000255" key="1">
    <source>
        <dbReference type="HAMAP-Rule" id="MF_00963"/>
    </source>
</evidence>
<evidence type="ECO:0000256" key="2">
    <source>
        <dbReference type="SAM" id="MobiDB-lite"/>
    </source>
</evidence>
<keyword id="KW-0963">Cytoplasm</keyword>
<keyword id="KW-0238">DNA-binding</keyword>
<keyword id="KW-1185">Reference proteome</keyword>
<keyword id="KW-0731">Sigma factor</keyword>
<keyword id="KW-0804">Transcription</keyword>
<keyword id="KW-0805">Transcription regulation</keyword>
<dbReference type="EMBL" id="AE000511">
    <property type="protein sequence ID" value="AAD07156.1"/>
    <property type="molecule type" value="Genomic_DNA"/>
</dbReference>
<dbReference type="PIR" id="H64530">
    <property type="entry name" value="H64530"/>
</dbReference>
<dbReference type="RefSeq" id="NP_206888.1">
    <property type="nucleotide sequence ID" value="NC_000915.1"/>
</dbReference>
<dbReference type="SMR" id="P55993"/>
<dbReference type="DIP" id="DIP-3055N"/>
<dbReference type="FunCoup" id="P55993">
    <property type="interactions" value="224"/>
</dbReference>
<dbReference type="IntAct" id="P55993">
    <property type="interactions" value="14"/>
</dbReference>
<dbReference type="MINT" id="P55993"/>
<dbReference type="STRING" id="85962.HP_0088"/>
<dbReference type="PaxDb" id="85962-C694_00430"/>
<dbReference type="EnsemblBacteria" id="AAD07156">
    <property type="protein sequence ID" value="AAD07156"/>
    <property type="gene ID" value="HP_0088"/>
</dbReference>
<dbReference type="KEGG" id="heo:C694_00430"/>
<dbReference type="KEGG" id="hpy:HP_0088"/>
<dbReference type="PATRIC" id="fig|85962.47.peg.94"/>
<dbReference type="eggNOG" id="COG0568">
    <property type="taxonomic scope" value="Bacteria"/>
</dbReference>
<dbReference type="InParanoid" id="P55993"/>
<dbReference type="OrthoDB" id="9809557at2"/>
<dbReference type="PhylomeDB" id="P55993"/>
<dbReference type="Proteomes" id="UP000000429">
    <property type="component" value="Chromosome"/>
</dbReference>
<dbReference type="GO" id="GO:0005737">
    <property type="term" value="C:cytoplasm"/>
    <property type="evidence" value="ECO:0007669"/>
    <property type="project" value="UniProtKB-SubCell"/>
</dbReference>
<dbReference type="GO" id="GO:0003677">
    <property type="term" value="F:DNA binding"/>
    <property type="evidence" value="ECO:0007669"/>
    <property type="project" value="UniProtKB-UniRule"/>
</dbReference>
<dbReference type="GO" id="GO:0016987">
    <property type="term" value="F:sigma factor activity"/>
    <property type="evidence" value="ECO:0007669"/>
    <property type="project" value="UniProtKB-UniRule"/>
</dbReference>
<dbReference type="GO" id="GO:0006352">
    <property type="term" value="P:DNA-templated transcription initiation"/>
    <property type="evidence" value="ECO:0007669"/>
    <property type="project" value="UniProtKB-UniRule"/>
</dbReference>
<dbReference type="CDD" id="cd06171">
    <property type="entry name" value="Sigma70_r4"/>
    <property type="match status" value="1"/>
</dbReference>
<dbReference type="FunFam" id="1.10.601.10:FF:000001">
    <property type="entry name" value="RNA polymerase sigma factor SigA"/>
    <property type="match status" value="1"/>
</dbReference>
<dbReference type="Gene3D" id="1.10.601.10">
    <property type="entry name" value="RNA Polymerase Primary Sigma Factor"/>
    <property type="match status" value="1"/>
</dbReference>
<dbReference type="Gene3D" id="1.10.10.10">
    <property type="entry name" value="Winged helix-like DNA-binding domain superfamily/Winged helix DNA-binding domain"/>
    <property type="match status" value="2"/>
</dbReference>
<dbReference type="HAMAP" id="MF_00963">
    <property type="entry name" value="Sigma70_RpoD_SigA"/>
    <property type="match status" value="1"/>
</dbReference>
<dbReference type="InterPro" id="IPR014284">
    <property type="entry name" value="RNA_pol_sigma-70_dom"/>
</dbReference>
<dbReference type="InterPro" id="IPR000943">
    <property type="entry name" value="RNA_pol_sigma70"/>
</dbReference>
<dbReference type="InterPro" id="IPR009042">
    <property type="entry name" value="RNA_pol_sigma70_r1_2"/>
</dbReference>
<dbReference type="InterPro" id="IPR007627">
    <property type="entry name" value="RNA_pol_sigma70_r2"/>
</dbReference>
<dbReference type="InterPro" id="IPR007624">
    <property type="entry name" value="RNA_pol_sigma70_r3"/>
</dbReference>
<dbReference type="InterPro" id="IPR007630">
    <property type="entry name" value="RNA_pol_sigma70_r4"/>
</dbReference>
<dbReference type="InterPro" id="IPR013325">
    <property type="entry name" value="RNA_pol_sigma_r2"/>
</dbReference>
<dbReference type="InterPro" id="IPR013324">
    <property type="entry name" value="RNA_pol_sigma_r3/r4-like"/>
</dbReference>
<dbReference type="InterPro" id="IPR012760">
    <property type="entry name" value="RNA_pol_sigma_RpoD_C"/>
</dbReference>
<dbReference type="InterPro" id="IPR050239">
    <property type="entry name" value="Sigma-70_RNA_pol_init_factors"/>
</dbReference>
<dbReference type="InterPro" id="IPR028630">
    <property type="entry name" value="Sigma70_RpoD"/>
</dbReference>
<dbReference type="InterPro" id="IPR036388">
    <property type="entry name" value="WH-like_DNA-bd_sf"/>
</dbReference>
<dbReference type="NCBIfam" id="NF004208">
    <property type="entry name" value="PRK05658.1"/>
    <property type="match status" value="1"/>
</dbReference>
<dbReference type="NCBIfam" id="TIGR02393">
    <property type="entry name" value="RpoD_Cterm"/>
    <property type="match status" value="1"/>
</dbReference>
<dbReference type="NCBIfam" id="TIGR02937">
    <property type="entry name" value="sigma70-ECF"/>
    <property type="match status" value="1"/>
</dbReference>
<dbReference type="PANTHER" id="PTHR30603">
    <property type="entry name" value="RNA POLYMERASE SIGMA FACTOR RPO"/>
    <property type="match status" value="1"/>
</dbReference>
<dbReference type="PANTHER" id="PTHR30603:SF60">
    <property type="entry name" value="RNA POLYMERASE SIGMA FACTOR RPOD"/>
    <property type="match status" value="1"/>
</dbReference>
<dbReference type="Pfam" id="PF00140">
    <property type="entry name" value="Sigma70_r1_2"/>
    <property type="match status" value="1"/>
</dbReference>
<dbReference type="Pfam" id="PF04542">
    <property type="entry name" value="Sigma70_r2"/>
    <property type="match status" value="1"/>
</dbReference>
<dbReference type="Pfam" id="PF04539">
    <property type="entry name" value="Sigma70_r3"/>
    <property type="match status" value="1"/>
</dbReference>
<dbReference type="Pfam" id="PF04545">
    <property type="entry name" value="Sigma70_r4"/>
    <property type="match status" value="1"/>
</dbReference>
<dbReference type="PRINTS" id="PR00046">
    <property type="entry name" value="SIGMA70FCT"/>
</dbReference>
<dbReference type="SUPFAM" id="SSF88946">
    <property type="entry name" value="Sigma2 domain of RNA polymerase sigma factors"/>
    <property type="match status" value="1"/>
</dbReference>
<dbReference type="SUPFAM" id="SSF88659">
    <property type="entry name" value="Sigma3 and sigma4 domains of RNA polymerase sigma factors"/>
    <property type="match status" value="2"/>
</dbReference>
<dbReference type="PROSITE" id="PS00715">
    <property type="entry name" value="SIGMA70_1"/>
    <property type="match status" value="1"/>
</dbReference>
<dbReference type="PROSITE" id="PS00716">
    <property type="entry name" value="SIGMA70_2"/>
    <property type="match status" value="1"/>
</dbReference>
<reference key="1">
    <citation type="journal article" date="1997" name="Nature">
        <title>The complete genome sequence of the gastric pathogen Helicobacter pylori.</title>
        <authorList>
            <person name="Tomb J.-F."/>
            <person name="White O."/>
            <person name="Kerlavage A.R."/>
            <person name="Clayton R.A."/>
            <person name="Sutton G.G."/>
            <person name="Fleischmann R.D."/>
            <person name="Ketchum K.A."/>
            <person name="Klenk H.-P."/>
            <person name="Gill S.R."/>
            <person name="Dougherty B.A."/>
            <person name="Nelson K.E."/>
            <person name="Quackenbush J."/>
            <person name="Zhou L."/>
            <person name="Kirkness E.F."/>
            <person name="Peterson S.N."/>
            <person name="Loftus B.J."/>
            <person name="Richardson D.L."/>
            <person name="Dodson R.J."/>
            <person name="Khalak H.G."/>
            <person name="Glodek A."/>
            <person name="McKenney K."/>
            <person name="FitzGerald L.M."/>
            <person name="Lee N."/>
            <person name="Adams M.D."/>
            <person name="Hickey E.K."/>
            <person name="Berg D.E."/>
            <person name="Gocayne J.D."/>
            <person name="Utterback T.R."/>
            <person name="Peterson J.D."/>
            <person name="Kelley J.M."/>
            <person name="Cotton M.D."/>
            <person name="Weidman J.F."/>
            <person name="Fujii C."/>
            <person name="Bowman C."/>
            <person name="Watthey L."/>
            <person name="Wallin E."/>
            <person name="Hayes W.S."/>
            <person name="Borodovsky M."/>
            <person name="Karp P.D."/>
            <person name="Smith H.O."/>
            <person name="Fraser C.M."/>
            <person name="Venter J.C."/>
        </authorList>
    </citation>
    <scope>NUCLEOTIDE SEQUENCE [LARGE SCALE GENOMIC DNA]</scope>
    <source>
        <strain>ATCC 700392 / 26695</strain>
    </source>
</reference>
<accession>P55993</accession>
<comment type="function">
    <text evidence="1">Sigma factors are initiation factors that promote the attachment of RNA polymerase to specific initiation sites and are then released. This sigma factor is the primary sigma factor during exponential growth.</text>
</comment>
<comment type="subunit">
    <text evidence="1">Interacts transiently with the RNA polymerase catalytic core.</text>
</comment>
<comment type="interaction">
    <interactant intactId="EBI-7494721">
        <id>P55993</id>
    </interactant>
    <interactant intactId="EBI-7707586">
        <id>O34754</id>
        <label>HP_1535</label>
    </interactant>
    <organismsDiffer>false</organismsDiffer>
    <experiments>4</experiments>
</comment>
<comment type="subcellular location">
    <subcellularLocation>
        <location evidence="1">Cytoplasm</location>
    </subcellularLocation>
</comment>
<comment type="similarity">
    <text evidence="1">Belongs to the sigma-70 factor family. RpoD/SigA subfamily.</text>
</comment>
<gene>
    <name evidence="1" type="primary">rpoD</name>
    <name type="ordered locus">HP_0088</name>
</gene>
<feature type="chain" id="PRO_0000093890" description="RNA polymerase sigma factor RpoD">
    <location>
        <begin position="1"/>
        <end position="671"/>
    </location>
</feature>
<feature type="DNA-binding region" description="H-T-H motif" evidence="1">
    <location>
        <begin position="631"/>
        <end position="650"/>
    </location>
</feature>
<feature type="region of interest" description="Disordered" evidence="2">
    <location>
        <begin position="1"/>
        <end position="45"/>
    </location>
</feature>
<feature type="region of interest" description="Disordered" evidence="2">
    <location>
        <begin position="229"/>
        <end position="260"/>
    </location>
</feature>
<feature type="region of interest" description="Sigma-70 factor domain-2" evidence="1">
    <location>
        <begin position="436"/>
        <end position="506"/>
    </location>
</feature>
<feature type="region of interest" description="Sigma-70 factor domain-3" evidence="1">
    <location>
        <begin position="515"/>
        <end position="591"/>
    </location>
</feature>
<feature type="region of interest" description="Sigma-70 factor domain-4" evidence="1">
    <location>
        <begin position="604"/>
        <end position="658"/>
    </location>
</feature>
<feature type="short sequence motif" description="Interaction with polymerase core subunit RpoC">
    <location>
        <begin position="460"/>
        <end position="463"/>
    </location>
</feature>
<feature type="compositionally biased region" description="Basic and acidic residues" evidence="2">
    <location>
        <begin position="251"/>
        <end position="260"/>
    </location>
</feature>
<protein>
    <recommendedName>
        <fullName evidence="1">RNA polymerase sigma factor RpoD</fullName>
    </recommendedName>
    <alternativeName>
        <fullName evidence="1">Sigma-70</fullName>
    </alternativeName>
</protein>
<name>RPOD_HELPY</name>
<organism>
    <name type="scientific">Helicobacter pylori (strain ATCC 700392 / 26695)</name>
    <name type="common">Campylobacter pylori</name>
    <dbReference type="NCBI Taxonomy" id="85962"/>
    <lineage>
        <taxon>Bacteria</taxon>
        <taxon>Pseudomonadati</taxon>
        <taxon>Campylobacterota</taxon>
        <taxon>Epsilonproteobacteria</taxon>
        <taxon>Campylobacterales</taxon>
        <taxon>Helicobacteraceae</taxon>
        <taxon>Helicobacter</taxon>
    </lineage>
</organism>